<organism>
    <name type="scientific">Protochlamydia amoebophila (strain UWE25)</name>
    <dbReference type="NCBI Taxonomy" id="264201"/>
    <lineage>
        <taxon>Bacteria</taxon>
        <taxon>Pseudomonadati</taxon>
        <taxon>Chlamydiota</taxon>
        <taxon>Chlamydiia</taxon>
        <taxon>Parachlamydiales</taxon>
        <taxon>Parachlamydiaceae</taxon>
        <taxon>Candidatus Protochlamydia</taxon>
    </lineage>
</organism>
<protein>
    <recommendedName>
        <fullName evidence="1">Large ribosomal subunit protein uL22</fullName>
    </recommendedName>
    <alternativeName>
        <fullName evidence="2">50S ribosomal protein L22</fullName>
    </alternativeName>
</protein>
<gene>
    <name evidence="1" type="primary">rplV</name>
    <name type="ordered locus">pc0417</name>
</gene>
<accession>Q6ME58</accession>
<sequence>MSYAKAISKYIRISPRKARLAAGLIRGLSVSDASLQLTFSGLKGGRLLKKTLDSAVANAETQLDMRRENLKVVEVRVDAGPTLKRAKPKNRGGRHPIMKRTSHFTVIVSNL</sequence>
<reference key="1">
    <citation type="journal article" date="2004" name="Science">
        <title>Illuminating the evolutionary history of chlamydiae.</title>
        <authorList>
            <person name="Horn M."/>
            <person name="Collingro A."/>
            <person name="Schmitz-Esser S."/>
            <person name="Beier C.L."/>
            <person name="Purkhold U."/>
            <person name="Fartmann B."/>
            <person name="Brandt P."/>
            <person name="Nyakatura G.J."/>
            <person name="Droege M."/>
            <person name="Frishman D."/>
            <person name="Rattei T."/>
            <person name="Mewes H.-W."/>
            <person name="Wagner M."/>
        </authorList>
    </citation>
    <scope>NUCLEOTIDE SEQUENCE [LARGE SCALE GENOMIC DNA]</scope>
    <source>
        <strain>UWE25</strain>
    </source>
</reference>
<feature type="chain" id="PRO_0000125193" description="Large ribosomal subunit protein uL22">
    <location>
        <begin position="1"/>
        <end position="111"/>
    </location>
</feature>
<name>RL22_PARUW</name>
<comment type="function">
    <text evidence="1">This protein binds specifically to 23S rRNA; its binding is stimulated by other ribosomal proteins, e.g. L4, L17, and L20. It is important during the early stages of 50S assembly. It makes multiple contacts with different domains of the 23S rRNA in the assembled 50S subunit and ribosome (By similarity).</text>
</comment>
<comment type="function">
    <text evidence="1">The globular domain of the protein is located near the polypeptide exit tunnel on the outside of the subunit, while an extended beta-hairpin is found that lines the wall of the exit tunnel in the center of the 70S ribosome.</text>
</comment>
<comment type="subunit">
    <text evidence="1">Part of the 50S ribosomal subunit.</text>
</comment>
<comment type="similarity">
    <text evidence="1">Belongs to the universal ribosomal protein uL22 family.</text>
</comment>
<proteinExistence type="inferred from homology"/>
<keyword id="KW-1185">Reference proteome</keyword>
<keyword id="KW-0687">Ribonucleoprotein</keyword>
<keyword id="KW-0689">Ribosomal protein</keyword>
<keyword id="KW-0694">RNA-binding</keyword>
<keyword id="KW-0699">rRNA-binding</keyword>
<evidence type="ECO:0000255" key="1">
    <source>
        <dbReference type="HAMAP-Rule" id="MF_01331"/>
    </source>
</evidence>
<evidence type="ECO:0000305" key="2"/>
<dbReference type="EMBL" id="BX908798">
    <property type="protein sequence ID" value="CAF23141.1"/>
    <property type="molecule type" value="Genomic_DNA"/>
</dbReference>
<dbReference type="RefSeq" id="WP_011174967.1">
    <property type="nucleotide sequence ID" value="NC_005861.2"/>
</dbReference>
<dbReference type="SMR" id="Q6ME58"/>
<dbReference type="STRING" id="264201.pc0417"/>
<dbReference type="KEGG" id="pcu:PC_RS02035"/>
<dbReference type="eggNOG" id="COG0091">
    <property type="taxonomic scope" value="Bacteria"/>
</dbReference>
<dbReference type="HOGENOM" id="CLU_083987_3_3_0"/>
<dbReference type="OrthoDB" id="9805969at2"/>
<dbReference type="Proteomes" id="UP000000529">
    <property type="component" value="Chromosome"/>
</dbReference>
<dbReference type="GO" id="GO:0022625">
    <property type="term" value="C:cytosolic large ribosomal subunit"/>
    <property type="evidence" value="ECO:0007669"/>
    <property type="project" value="TreeGrafter"/>
</dbReference>
<dbReference type="GO" id="GO:0019843">
    <property type="term" value="F:rRNA binding"/>
    <property type="evidence" value="ECO:0007669"/>
    <property type="project" value="UniProtKB-UniRule"/>
</dbReference>
<dbReference type="GO" id="GO:0003735">
    <property type="term" value="F:structural constituent of ribosome"/>
    <property type="evidence" value="ECO:0007669"/>
    <property type="project" value="InterPro"/>
</dbReference>
<dbReference type="GO" id="GO:0006412">
    <property type="term" value="P:translation"/>
    <property type="evidence" value="ECO:0007669"/>
    <property type="project" value="UniProtKB-UniRule"/>
</dbReference>
<dbReference type="CDD" id="cd00336">
    <property type="entry name" value="Ribosomal_L22"/>
    <property type="match status" value="1"/>
</dbReference>
<dbReference type="Gene3D" id="3.90.470.10">
    <property type="entry name" value="Ribosomal protein L22/L17"/>
    <property type="match status" value="1"/>
</dbReference>
<dbReference type="HAMAP" id="MF_01331_B">
    <property type="entry name" value="Ribosomal_uL22_B"/>
    <property type="match status" value="1"/>
</dbReference>
<dbReference type="InterPro" id="IPR001063">
    <property type="entry name" value="Ribosomal_uL22"/>
</dbReference>
<dbReference type="InterPro" id="IPR005727">
    <property type="entry name" value="Ribosomal_uL22_bac/chlpt-type"/>
</dbReference>
<dbReference type="InterPro" id="IPR047867">
    <property type="entry name" value="Ribosomal_uL22_bac/org-type"/>
</dbReference>
<dbReference type="InterPro" id="IPR036394">
    <property type="entry name" value="Ribosomal_uL22_sf"/>
</dbReference>
<dbReference type="NCBIfam" id="TIGR01044">
    <property type="entry name" value="rplV_bact"/>
    <property type="match status" value="1"/>
</dbReference>
<dbReference type="PANTHER" id="PTHR13501">
    <property type="entry name" value="CHLOROPLAST 50S RIBOSOMAL PROTEIN L22-RELATED"/>
    <property type="match status" value="1"/>
</dbReference>
<dbReference type="PANTHER" id="PTHR13501:SF8">
    <property type="entry name" value="LARGE RIBOSOMAL SUBUNIT PROTEIN UL22M"/>
    <property type="match status" value="1"/>
</dbReference>
<dbReference type="Pfam" id="PF00237">
    <property type="entry name" value="Ribosomal_L22"/>
    <property type="match status" value="1"/>
</dbReference>
<dbReference type="SUPFAM" id="SSF54843">
    <property type="entry name" value="Ribosomal protein L22"/>
    <property type="match status" value="1"/>
</dbReference>